<evidence type="ECO:0000250" key="1"/>
<sequence>MEMELIQGNEAAVRGAINAGCNFFAGYPITPSSEIAHGMAELLPKFGGVFIQMEDEIASISAVIGASMAGAVAMTATSGPGFSLMQEGMGYAAITESPVVIFNVMRAGPSTGIPTAPSQGDAMQARYGSHGDYPIVVLAPASVKDMYYLTVEAFKIAFRFSTPVIVLSDEIVGHMRESVALPPLGEIESYEKRAKNLIDGRRRHRTGLVHTENGLPTTDLEEYEKLLRLLFAKFDDFRPMVRFEGEEGVLFVAYGSSYRLAKSSAKLLAEKGVSAGILKLESLFPFPEDAVRRYSKKADLVVVPEMNAGQVVKEVERVCCCRVKGVSYFGSLILPEKLVEIVEGEL</sequence>
<proteinExistence type="inferred from homology"/>
<accession>O29781</accession>
<protein>
    <recommendedName>
        <fullName>2-oxoglutarate synthase subunit KorA</fullName>
        <ecNumber>1.2.7.3</ecNumber>
    </recommendedName>
    <alternativeName>
        <fullName>2-ketoglutarate oxidoreductase alpha chain</fullName>
        <shortName>KOR</shortName>
    </alternativeName>
    <alternativeName>
        <fullName>2-oxoglutarate-ferredoxin oxidoreductase subunit alpha</fullName>
    </alternativeName>
</protein>
<feature type="chain" id="PRO_0000099937" description="2-oxoglutarate synthase subunit KorA">
    <location>
        <begin position="1"/>
        <end position="346"/>
    </location>
</feature>
<name>KORA_ARCFU</name>
<keyword id="KW-0560">Oxidoreductase</keyword>
<keyword id="KW-1185">Reference proteome</keyword>
<comment type="catalytic activity">
    <reaction>
        <text>2 oxidized [2Fe-2S]-[ferredoxin] + 2-oxoglutarate + CoA = succinyl-CoA + 2 reduced [2Fe-2S]-[ferredoxin] + CO2 + H(+)</text>
        <dbReference type="Rhea" id="RHEA:17297"/>
        <dbReference type="Rhea" id="RHEA-COMP:10000"/>
        <dbReference type="Rhea" id="RHEA-COMP:10001"/>
        <dbReference type="ChEBI" id="CHEBI:15378"/>
        <dbReference type="ChEBI" id="CHEBI:16526"/>
        <dbReference type="ChEBI" id="CHEBI:16810"/>
        <dbReference type="ChEBI" id="CHEBI:33737"/>
        <dbReference type="ChEBI" id="CHEBI:33738"/>
        <dbReference type="ChEBI" id="CHEBI:57287"/>
        <dbReference type="ChEBI" id="CHEBI:57292"/>
        <dbReference type="EC" id="1.2.7.3"/>
    </reaction>
</comment>
<comment type="subunit">
    <text evidence="1">Heterotetramer of the KorA, KorB, KorC and KorD subunits.</text>
</comment>
<organism>
    <name type="scientific">Archaeoglobus fulgidus (strain ATCC 49558 / DSM 4304 / JCM 9628 / NBRC 100126 / VC-16)</name>
    <dbReference type="NCBI Taxonomy" id="224325"/>
    <lineage>
        <taxon>Archaea</taxon>
        <taxon>Methanobacteriati</taxon>
        <taxon>Methanobacteriota</taxon>
        <taxon>Archaeoglobi</taxon>
        <taxon>Archaeoglobales</taxon>
        <taxon>Archaeoglobaceae</taxon>
        <taxon>Archaeoglobus</taxon>
    </lineage>
</organism>
<gene>
    <name type="primary">korA</name>
    <name type="ordered locus">AF_0469</name>
</gene>
<dbReference type="EC" id="1.2.7.3"/>
<dbReference type="EMBL" id="AE000782">
    <property type="protein sequence ID" value="AAB90768.1"/>
    <property type="molecule type" value="Genomic_DNA"/>
</dbReference>
<dbReference type="PIR" id="E69308">
    <property type="entry name" value="E69308"/>
</dbReference>
<dbReference type="SMR" id="O29781"/>
<dbReference type="STRING" id="224325.AF_0469"/>
<dbReference type="PaxDb" id="224325-AF_0469"/>
<dbReference type="EnsemblBacteria" id="AAB90768">
    <property type="protein sequence ID" value="AAB90768"/>
    <property type="gene ID" value="AF_0469"/>
</dbReference>
<dbReference type="KEGG" id="afu:AF_0469"/>
<dbReference type="eggNOG" id="arCOG01607">
    <property type="taxonomic scope" value="Archaea"/>
</dbReference>
<dbReference type="HOGENOM" id="CLU_017038_0_1_2"/>
<dbReference type="PhylomeDB" id="O29781"/>
<dbReference type="Proteomes" id="UP000002199">
    <property type="component" value="Chromosome"/>
</dbReference>
<dbReference type="GO" id="GO:0047553">
    <property type="term" value="F:2-oxoglutarate synthase activity"/>
    <property type="evidence" value="ECO:0007669"/>
    <property type="project" value="UniProtKB-EC"/>
</dbReference>
<dbReference type="GO" id="GO:0006082">
    <property type="term" value="P:organic acid metabolic process"/>
    <property type="evidence" value="ECO:0007669"/>
    <property type="project" value="UniProtKB-ARBA"/>
</dbReference>
<dbReference type="GO" id="GO:0044272">
    <property type="term" value="P:sulfur compound biosynthetic process"/>
    <property type="evidence" value="ECO:0007669"/>
    <property type="project" value="UniProtKB-ARBA"/>
</dbReference>
<dbReference type="CDD" id="cd07034">
    <property type="entry name" value="TPP_PYR_PFOR_IOR-alpha_like"/>
    <property type="match status" value="1"/>
</dbReference>
<dbReference type="FunFam" id="3.40.50.970:FF:000022">
    <property type="entry name" value="2-oxoglutarate ferredoxin oxidoreductase alpha subunit"/>
    <property type="match status" value="1"/>
</dbReference>
<dbReference type="Gene3D" id="3.40.50.920">
    <property type="match status" value="1"/>
</dbReference>
<dbReference type="Gene3D" id="3.40.50.970">
    <property type="match status" value="1"/>
</dbReference>
<dbReference type="InterPro" id="IPR052368">
    <property type="entry name" value="2-oxoacid_oxidoreductase"/>
</dbReference>
<dbReference type="InterPro" id="IPR033412">
    <property type="entry name" value="PFOR_II"/>
</dbReference>
<dbReference type="InterPro" id="IPR002880">
    <property type="entry name" value="Pyrv_Fd/Flavodoxin_OxRdtase_N"/>
</dbReference>
<dbReference type="InterPro" id="IPR029061">
    <property type="entry name" value="THDP-binding"/>
</dbReference>
<dbReference type="InterPro" id="IPR009014">
    <property type="entry name" value="Transketo_C/PFOR_II"/>
</dbReference>
<dbReference type="PANTHER" id="PTHR43088:SF1">
    <property type="entry name" value="SUBUNIT OF PYRUVATE:FLAVODOXIN OXIDOREDUCTASE"/>
    <property type="match status" value="1"/>
</dbReference>
<dbReference type="PANTHER" id="PTHR43088">
    <property type="entry name" value="SUBUNIT OF PYRUVATE:FLAVODOXIN OXIDOREDUCTASE-RELATED"/>
    <property type="match status" value="1"/>
</dbReference>
<dbReference type="Pfam" id="PF17147">
    <property type="entry name" value="PFOR_II"/>
    <property type="match status" value="1"/>
</dbReference>
<dbReference type="Pfam" id="PF01855">
    <property type="entry name" value="POR_N"/>
    <property type="match status" value="1"/>
</dbReference>
<dbReference type="SUPFAM" id="SSF52518">
    <property type="entry name" value="Thiamin diphosphate-binding fold (THDP-binding)"/>
    <property type="match status" value="1"/>
</dbReference>
<dbReference type="SUPFAM" id="SSF52922">
    <property type="entry name" value="TK C-terminal domain-like"/>
    <property type="match status" value="1"/>
</dbReference>
<reference key="1">
    <citation type="journal article" date="1997" name="Nature">
        <title>The complete genome sequence of the hyperthermophilic, sulphate-reducing archaeon Archaeoglobus fulgidus.</title>
        <authorList>
            <person name="Klenk H.-P."/>
            <person name="Clayton R.A."/>
            <person name="Tomb J.-F."/>
            <person name="White O."/>
            <person name="Nelson K.E."/>
            <person name="Ketchum K.A."/>
            <person name="Dodson R.J."/>
            <person name="Gwinn M.L."/>
            <person name="Hickey E.K."/>
            <person name="Peterson J.D."/>
            <person name="Richardson D.L."/>
            <person name="Kerlavage A.R."/>
            <person name="Graham D.E."/>
            <person name="Kyrpides N.C."/>
            <person name="Fleischmann R.D."/>
            <person name="Quackenbush J."/>
            <person name="Lee N.H."/>
            <person name="Sutton G.G."/>
            <person name="Gill S.R."/>
            <person name="Kirkness E.F."/>
            <person name="Dougherty B.A."/>
            <person name="McKenney K."/>
            <person name="Adams M.D."/>
            <person name="Loftus B.J."/>
            <person name="Peterson S.N."/>
            <person name="Reich C.I."/>
            <person name="McNeil L.K."/>
            <person name="Badger J.H."/>
            <person name="Glodek A."/>
            <person name="Zhou L."/>
            <person name="Overbeek R."/>
            <person name="Gocayne J.D."/>
            <person name="Weidman J.F."/>
            <person name="McDonald L.A."/>
            <person name="Utterback T.R."/>
            <person name="Cotton M.D."/>
            <person name="Spriggs T."/>
            <person name="Artiach P."/>
            <person name="Kaine B.P."/>
            <person name="Sykes S.M."/>
            <person name="Sadow P.W."/>
            <person name="D'Andrea K.P."/>
            <person name="Bowman C."/>
            <person name="Fujii C."/>
            <person name="Garland S.A."/>
            <person name="Mason T.M."/>
            <person name="Olsen G.J."/>
            <person name="Fraser C.M."/>
            <person name="Smith H.O."/>
            <person name="Woese C.R."/>
            <person name="Venter J.C."/>
        </authorList>
    </citation>
    <scope>NUCLEOTIDE SEQUENCE [LARGE SCALE GENOMIC DNA]</scope>
    <source>
        <strain>ATCC 49558 / DSM 4304 / JCM 9628 / NBRC 100126 / VC-16</strain>
    </source>
</reference>